<evidence type="ECO:0000255" key="1">
    <source>
        <dbReference type="HAMAP-Rule" id="MF_00394"/>
    </source>
</evidence>
<sequence>MKETIAYLGMGMWGFSLANLLANNGHRVVGWARNPSLIEQLSTQRQHPAAPHVTIPSNLSFTSSMEEALDGATMIVEGVTSAGMRPVLNQLKSITDLQIPLVITSKGIEQNTGLLLSEIALEIFGKPAAKYLGYLSGPSIASEVLRGCPCSVVISAYDPATLKQIHQAFLTPTFRVYPNSDLKGVALGGALKNVIAIACGISDGFRFGDNAKSGLVTRGLHEIRKFATIMGCRPDTLNGLAGLGDLCTTCFSAFSRNTLFGKMLAEGLTPEQAKTKIGMVVEGVYTALSAHQIATHHKIDMPITTGVYRVLYENLDIQKGIAQLLQRNTKEEYL</sequence>
<protein>
    <recommendedName>
        <fullName evidence="1">Glycerol-3-phosphate dehydrogenase [NAD(P)+]</fullName>
        <ecNumber evidence="1">1.1.1.94</ecNumber>
    </recommendedName>
    <alternativeName>
        <fullName evidence="1">NAD(P)(+)-dependent glycerol-3-phosphate dehydrogenase</fullName>
    </alternativeName>
    <alternativeName>
        <fullName evidence="1">NAD(P)H-dependent dihydroxyacetone-phosphate reductase</fullName>
    </alternativeName>
</protein>
<proteinExistence type="inferred from homology"/>
<comment type="function">
    <text evidence="1">Catalyzes the reduction of the glycolytic intermediate dihydroxyacetone phosphate (DHAP) to sn-glycerol 3-phosphate (G3P), the key precursor for phospholipid synthesis.</text>
</comment>
<comment type="catalytic activity">
    <reaction evidence="1">
        <text>sn-glycerol 3-phosphate + NAD(+) = dihydroxyacetone phosphate + NADH + H(+)</text>
        <dbReference type="Rhea" id="RHEA:11092"/>
        <dbReference type="ChEBI" id="CHEBI:15378"/>
        <dbReference type="ChEBI" id="CHEBI:57540"/>
        <dbReference type="ChEBI" id="CHEBI:57597"/>
        <dbReference type="ChEBI" id="CHEBI:57642"/>
        <dbReference type="ChEBI" id="CHEBI:57945"/>
        <dbReference type="EC" id="1.1.1.94"/>
    </reaction>
    <physiologicalReaction direction="right-to-left" evidence="1">
        <dbReference type="Rhea" id="RHEA:11094"/>
    </physiologicalReaction>
</comment>
<comment type="catalytic activity">
    <reaction evidence="1">
        <text>sn-glycerol 3-phosphate + NADP(+) = dihydroxyacetone phosphate + NADPH + H(+)</text>
        <dbReference type="Rhea" id="RHEA:11096"/>
        <dbReference type="ChEBI" id="CHEBI:15378"/>
        <dbReference type="ChEBI" id="CHEBI:57597"/>
        <dbReference type="ChEBI" id="CHEBI:57642"/>
        <dbReference type="ChEBI" id="CHEBI:57783"/>
        <dbReference type="ChEBI" id="CHEBI:58349"/>
        <dbReference type="EC" id="1.1.1.94"/>
    </reaction>
    <physiologicalReaction direction="right-to-left" evidence="1">
        <dbReference type="Rhea" id="RHEA:11098"/>
    </physiologicalReaction>
</comment>
<comment type="pathway">
    <text evidence="1">Membrane lipid metabolism; glycerophospholipid metabolism.</text>
</comment>
<comment type="subcellular location">
    <subcellularLocation>
        <location evidence="1">Cytoplasm</location>
    </subcellularLocation>
</comment>
<comment type="similarity">
    <text evidence="1">Belongs to the NAD-dependent glycerol-3-phosphate dehydrogenase family.</text>
</comment>
<name>GPDA_CHLMU</name>
<organism>
    <name type="scientific">Chlamydia muridarum (strain MoPn / Nigg)</name>
    <dbReference type="NCBI Taxonomy" id="243161"/>
    <lineage>
        <taxon>Bacteria</taxon>
        <taxon>Pseudomonadati</taxon>
        <taxon>Chlamydiota</taxon>
        <taxon>Chlamydiia</taxon>
        <taxon>Chlamydiales</taxon>
        <taxon>Chlamydiaceae</taxon>
        <taxon>Chlamydia/Chlamydophila group</taxon>
        <taxon>Chlamydia</taxon>
    </lineage>
</organism>
<keyword id="KW-0963">Cytoplasm</keyword>
<keyword id="KW-0444">Lipid biosynthesis</keyword>
<keyword id="KW-0443">Lipid metabolism</keyword>
<keyword id="KW-0520">NAD</keyword>
<keyword id="KW-0521">NADP</keyword>
<keyword id="KW-0547">Nucleotide-binding</keyword>
<keyword id="KW-0560">Oxidoreductase</keyword>
<keyword id="KW-0594">Phospholipid biosynthesis</keyword>
<keyword id="KW-1208">Phospholipid metabolism</keyword>
<accession>Q9PLL2</accession>
<reference key="1">
    <citation type="journal article" date="2000" name="Nucleic Acids Res.">
        <title>Genome sequences of Chlamydia trachomatis MoPn and Chlamydia pneumoniae AR39.</title>
        <authorList>
            <person name="Read T.D."/>
            <person name="Brunham R.C."/>
            <person name="Shen C."/>
            <person name="Gill S.R."/>
            <person name="Heidelberg J.F."/>
            <person name="White O."/>
            <person name="Hickey E.K."/>
            <person name="Peterson J.D."/>
            <person name="Utterback T.R."/>
            <person name="Berry K.J."/>
            <person name="Bass S."/>
            <person name="Linher K.D."/>
            <person name="Weidman J.F."/>
            <person name="Khouri H.M."/>
            <person name="Craven B."/>
            <person name="Bowman C."/>
            <person name="Dodson R.J."/>
            <person name="Gwinn M.L."/>
            <person name="Nelson W.C."/>
            <person name="DeBoy R.T."/>
            <person name="Kolonay J.F."/>
            <person name="McClarty G."/>
            <person name="Salzberg S.L."/>
            <person name="Eisen J.A."/>
            <person name="Fraser C.M."/>
        </authorList>
    </citation>
    <scope>NUCLEOTIDE SEQUENCE [LARGE SCALE GENOMIC DNA]</scope>
    <source>
        <strain>MoPn / Nigg</strain>
    </source>
</reference>
<feature type="chain" id="PRO_0000137942" description="Glycerol-3-phosphate dehydrogenase [NAD(P)+]">
    <location>
        <begin position="1"/>
        <end position="334"/>
    </location>
</feature>
<feature type="active site" description="Proton acceptor" evidence="1">
    <location>
        <position position="192"/>
    </location>
</feature>
<feature type="binding site" evidence="1">
    <location>
        <position position="13"/>
    </location>
    <ligand>
        <name>NADPH</name>
        <dbReference type="ChEBI" id="CHEBI:57783"/>
    </ligand>
</feature>
<feature type="binding site" evidence="1">
    <location>
        <position position="33"/>
    </location>
    <ligand>
        <name>NADPH</name>
        <dbReference type="ChEBI" id="CHEBI:57783"/>
    </ligand>
</feature>
<feature type="binding site" evidence="1">
    <location>
        <position position="106"/>
    </location>
    <ligand>
        <name>NADPH</name>
        <dbReference type="ChEBI" id="CHEBI:57783"/>
    </ligand>
</feature>
<feature type="binding site" evidence="1">
    <location>
        <position position="106"/>
    </location>
    <ligand>
        <name>sn-glycerol 3-phosphate</name>
        <dbReference type="ChEBI" id="CHEBI:57597"/>
    </ligand>
</feature>
<feature type="binding site" evidence="1">
    <location>
        <position position="137"/>
    </location>
    <ligand>
        <name>sn-glycerol 3-phosphate</name>
        <dbReference type="ChEBI" id="CHEBI:57597"/>
    </ligand>
</feature>
<feature type="binding site" evidence="1">
    <location>
        <position position="139"/>
    </location>
    <ligand>
        <name>sn-glycerol 3-phosphate</name>
        <dbReference type="ChEBI" id="CHEBI:57597"/>
    </ligand>
</feature>
<feature type="binding site" evidence="1">
    <location>
        <position position="141"/>
    </location>
    <ligand>
        <name>NADPH</name>
        <dbReference type="ChEBI" id="CHEBI:57783"/>
    </ligand>
</feature>
<feature type="binding site" evidence="1">
    <location>
        <position position="192"/>
    </location>
    <ligand>
        <name>sn-glycerol 3-phosphate</name>
        <dbReference type="ChEBI" id="CHEBI:57597"/>
    </ligand>
</feature>
<feature type="binding site" evidence="1">
    <location>
        <position position="245"/>
    </location>
    <ligand>
        <name>sn-glycerol 3-phosphate</name>
        <dbReference type="ChEBI" id="CHEBI:57597"/>
    </ligand>
</feature>
<feature type="binding site" evidence="1">
    <location>
        <position position="255"/>
    </location>
    <ligand>
        <name>sn-glycerol 3-phosphate</name>
        <dbReference type="ChEBI" id="CHEBI:57597"/>
    </ligand>
</feature>
<feature type="binding site" evidence="1">
    <location>
        <position position="256"/>
    </location>
    <ligand>
        <name>NADPH</name>
        <dbReference type="ChEBI" id="CHEBI:57783"/>
    </ligand>
</feature>
<feature type="binding site" evidence="1">
    <location>
        <position position="256"/>
    </location>
    <ligand>
        <name>sn-glycerol 3-phosphate</name>
        <dbReference type="ChEBI" id="CHEBI:57597"/>
    </ligand>
</feature>
<feature type="binding site" evidence="1">
    <location>
        <position position="257"/>
    </location>
    <ligand>
        <name>sn-glycerol 3-phosphate</name>
        <dbReference type="ChEBI" id="CHEBI:57597"/>
    </ligand>
</feature>
<feature type="binding site" evidence="1">
    <location>
        <position position="280"/>
    </location>
    <ligand>
        <name>NADPH</name>
        <dbReference type="ChEBI" id="CHEBI:57783"/>
    </ligand>
</feature>
<feature type="binding site" evidence="1">
    <location>
        <position position="282"/>
    </location>
    <ligand>
        <name>NADPH</name>
        <dbReference type="ChEBI" id="CHEBI:57783"/>
    </ligand>
</feature>
<dbReference type="EC" id="1.1.1.94" evidence="1"/>
<dbReference type="EMBL" id="AE002160">
    <property type="protein sequence ID" value="AAF38967.1"/>
    <property type="molecule type" value="Genomic_DNA"/>
</dbReference>
<dbReference type="PIR" id="A81743">
    <property type="entry name" value="A81743"/>
</dbReference>
<dbReference type="RefSeq" id="WP_010229335.1">
    <property type="nucleotide sequence ID" value="NZ_CP063055.1"/>
</dbReference>
<dbReference type="SMR" id="Q9PLL2"/>
<dbReference type="GeneID" id="1245617"/>
<dbReference type="KEGG" id="cmu:TC_0087"/>
<dbReference type="eggNOG" id="COG0240">
    <property type="taxonomic scope" value="Bacteria"/>
</dbReference>
<dbReference type="HOGENOM" id="CLU_033449_0_2_0"/>
<dbReference type="OrthoDB" id="9812273at2"/>
<dbReference type="UniPathway" id="UPA00940"/>
<dbReference type="Proteomes" id="UP000000800">
    <property type="component" value="Chromosome"/>
</dbReference>
<dbReference type="GO" id="GO:0005829">
    <property type="term" value="C:cytosol"/>
    <property type="evidence" value="ECO:0007669"/>
    <property type="project" value="TreeGrafter"/>
</dbReference>
<dbReference type="GO" id="GO:0047952">
    <property type="term" value="F:glycerol-3-phosphate dehydrogenase [NAD(P)+] activity"/>
    <property type="evidence" value="ECO:0007669"/>
    <property type="project" value="UniProtKB-UniRule"/>
</dbReference>
<dbReference type="GO" id="GO:0051287">
    <property type="term" value="F:NAD binding"/>
    <property type="evidence" value="ECO:0007669"/>
    <property type="project" value="InterPro"/>
</dbReference>
<dbReference type="GO" id="GO:0005975">
    <property type="term" value="P:carbohydrate metabolic process"/>
    <property type="evidence" value="ECO:0007669"/>
    <property type="project" value="InterPro"/>
</dbReference>
<dbReference type="GO" id="GO:0046167">
    <property type="term" value="P:glycerol-3-phosphate biosynthetic process"/>
    <property type="evidence" value="ECO:0007669"/>
    <property type="project" value="UniProtKB-UniRule"/>
</dbReference>
<dbReference type="GO" id="GO:0046168">
    <property type="term" value="P:glycerol-3-phosphate catabolic process"/>
    <property type="evidence" value="ECO:0007669"/>
    <property type="project" value="InterPro"/>
</dbReference>
<dbReference type="GO" id="GO:0006650">
    <property type="term" value="P:glycerophospholipid metabolic process"/>
    <property type="evidence" value="ECO:0007669"/>
    <property type="project" value="UniProtKB-UniRule"/>
</dbReference>
<dbReference type="GO" id="GO:0008654">
    <property type="term" value="P:phospholipid biosynthetic process"/>
    <property type="evidence" value="ECO:0007669"/>
    <property type="project" value="UniProtKB-KW"/>
</dbReference>
<dbReference type="FunFam" id="1.10.1040.10:FF:000001">
    <property type="entry name" value="Glycerol-3-phosphate dehydrogenase [NAD(P)+]"/>
    <property type="match status" value="1"/>
</dbReference>
<dbReference type="Gene3D" id="1.10.1040.10">
    <property type="entry name" value="N-(1-d-carboxylethyl)-l-norvaline Dehydrogenase, domain 2"/>
    <property type="match status" value="1"/>
</dbReference>
<dbReference type="Gene3D" id="3.40.50.720">
    <property type="entry name" value="NAD(P)-binding Rossmann-like Domain"/>
    <property type="match status" value="1"/>
</dbReference>
<dbReference type="HAMAP" id="MF_00394">
    <property type="entry name" value="NAD_Glyc3P_dehydrog"/>
    <property type="match status" value="1"/>
</dbReference>
<dbReference type="InterPro" id="IPR008927">
    <property type="entry name" value="6-PGluconate_DH-like_C_sf"/>
</dbReference>
<dbReference type="InterPro" id="IPR013328">
    <property type="entry name" value="6PGD_dom2"/>
</dbReference>
<dbReference type="InterPro" id="IPR006168">
    <property type="entry name" value="G3P_DH_NAD-dep"/>
</dbReference>
<dbReference type="InterPro" id="IPR006109">
    <property type="entry name" value="G3P_DH_NAD-dep_C"/>
</dbReference>
<dbReference type="InterPro" id="IPR011128">
    <property type="entry name" value="G3P_DH_NAD-dep_N"/>
</dbReference>
<dbReference type="InterPro" id="IPR036291">
    <property type="entry name" value="NAD(P)-bd_dom_sf"/>
</dbReference>
<dbReference type="NCBIfam" id="NF000940">
    <property type="entry name" value="PRK00094.1-2"/>
    <property type="match status" value="1"/>
</dbReference>
<dbReference type="NCBIfam" id="NF000942">
    <property type="entry name" value="PRK00094.1-4"/>
    <property type="match status" value="1"/>
</dbReference>
<dbReference type="PANTHER" id="PTHR11728">
    <property type="entry name" value="GLYCEROL-3-PHOSPHATE DEHYDROGENASE"/>
    <property type="match status" value="1"/>
</dbReference>
<dbReference type="PANTHER" id="PTHR11728:SF1">
    <property type="entry name" value="GLYCEROL-3-PHOSPHATE DEHYDROGENASE [NAD(+)] 2, CHLOROPLASTIC"/>
    <property type="match status" value="1"/>
</dbReference>
<dbReference type="Pfam" id="PF07479">
    <property type="entry name" value="NAD_Gly3P_dh_C"/>
    <property type="match status" value="1"/>
</dbReference>
<dbReference type="Pfam" id="PF01210">
    <property type="entry name" value="NAD_Gly3P_dh_N"/>
    <property type="match status" value="1"/>
</dbReference>
<dbReference type="PIRSF" id="PIRSF000114">
    <property type="entry name" value="Glycerol-3-P_dh"/>
    <property type="match status" value="1"/>
</dbReference>
<dbReference type="PRINTS" id="PR00077">
    <property type="entry name" value="GPDHDRGNASE"/>
</dbReference>
<dbReference type="SUPFAM" id="SSF48179">
    <property type="entry name" value="6-phosphogluconate dehydrogenase C-terminal domain-like"/>
    <property type="match status" value="1"/>
</dbReference>
<dbReference type="SUPFAM" id="SSF51735">
    <property type="entry name" value="NAD(P)-binding Rossmann-fold domains"/>
    <property type="match status" value="1"/>
</dbReference>
<dbReference type="PROSITE" id="PS00957">
    <property type="entry name" value="NAD_G3PDH"/>
    <property type="match status" value="1"/>
</dbReference>
<gene>
    <name evidence="1" type="primary">gpsA</name>
    <name type="ordered locus">TC_0087</name>
</gene>